<dbReference type="EMBL" id="AE017282">
    <property type="protein sequence ID" value="AAU90757.1"/>
    <property type="molecule type" value="Genomic_DNA"/>
</dbReference>
<dbReference type="SMR" id="Q60CS0"/>
<dbReference type="STRING" id="243233.MCA0006"/>
<dbReference type="GeneID" id="88222359"/>
<dbReference type="KEGG" id="mca:MCA0006"/>
<dbReference type="eggNOG" id="COG0356">
    <property type="taxonomic scope" value="Bacteria"/>
</dbReference>
<dbReference type="HOGENOM" id="CLU_041018_1_0_6"/>
<dbReference type="Proteomes" id="UP000006821">
    <property type="component" value="Chromosome"/>
</dbReference>
<dbReference type="GO" id="GO:0005886">
    <property type="term" value="C:plasma membrane"/>
    <property type="evidence" value="ECO:0007669"/>
    <property type="project" value="UniProtKB-SubCell"/>
</dbReference>
<dbReference type="GO" id="GO:0045259">
    <property type="term" value="C:proton-transporting ATP synthase complex"/>
    <property type="evidence" value="ECO:0007669"/>
    <property type="project" value="UniProtKB-KW"/>
</dbReference>
<dbReference type="GO" id="GO:0046933">
    <property type="term" value="F:proton-transporting ATP synthase activity, rotational mechanism"/>
    <property type="evidence" value="ECO:0007669"/>
    <property type="project" value="UniProtKB-UniRule"/>
</dbReference>
<dbReference type="GO" id="GO:0042777">
    <property type="term" value="P:proton motive force-driven plasma membrane ATP synthesis"/>
    <property type="evidence" value="ECO:0007669"/>
    <property type="project" value="TreeGrafter"/>
</dbReference>
<dbReference type="CDD" id="cd00310">
    <property type="entry name" value="ATP-synt_Fo_a_6"/>
    <property type="match status" value="1"/>
</dbReference>
<dbReference type="FunFam" id="1.20.120.220:FF:000002">
    <property type="entry name" value="ATP synthase subunit a"/>
    <property type="match status" value="1"/>
</dbReference>
<dbReference type="Gene3D" id="1.20.120.220">
    <property type="entry name" value="ATP synthase, F0 complex, subunit A"/>
    <property type="match status" value="1"/>
</dbReference>
<dbReference type="HAMAP" id="MF_01393">
    <property type="entry name" value="ATP_synth_a_bact"/>
    <property type="match status" value="1"/>
</dbReference>
<dbReference type="InterPro" id="IPR045082">
    <property type="entry name" value="ATP_syn_F0_a_bact/chloroplast"/>
</dbReference>
<dbReference type="InterPro" id="IPR000568">
    <property type="entry name" value="ATP_synth_F0_asu"/>
</dbReference>
<dbReference type="InterPro" id="IPR023011">
    <property type="entry name" value="ATP_synth_F0_asu_AS"/>
</dbReference>
<dbReference type="InterPro" id="IPR035908">
    <property type="entry name" value="F0_ATP_A_sf"/>
</dbReference>
<dbReference type="NCBIfam" id="TIGR01131">
    <property type="entry name" value="ATP_synt_6_or_A"/>
    <property type="match status" value="1"/>
</dbReference>
<dbReference type="NCBIfam" id="NF004477">
    <property type="entry name" value="PRK05815.1-1"/>
    <property type="match status" value="1"/>
</dbReference>
<dbReference type="PANTHER" id="PTHR42823">
    <property type="entry name" value="ATP SYNTHASE SUBUNIT A, CHLOROPLASTIC"/>
    <property type="match status" value="1"/>
</dbReference>
<dbReference type="PANTHER" id="PTHR42823:SF3">
    <property type="entry name" value="ATP SYNTHASE SUBUNIT A, CHLOROPLASTIC"/>
    <property type="match status" value="1"/>
</dbReference>
<dbReference type="Pfam" id="PF00119">
    <property type="entry name" value="ATP-synt_A"/>
    <property type="match status" value="1"/>
</dbReference>
<dbReference type="PRINTS" id="PR00123">
    <property type="entry name" value="ATPASEA"/>
</dbReference>
<dbReference type="SUPFAM" id="SSF81336">
    <property type="entry name" value="F1F0 ATP synthase subunit A"/>
    <property type="match status" value="1"/>
</dbReference>
<dbReference type="PROSITE" id="PS00449">
    <property type="entry name" value="ATPASE_A"/>
    <property type="match status" value="1"/>
</dbReference>
<sequence length="259" mass="28915">MATEAHDAGGATGYIVHHLTPLSSGEGFWTLHVDTLFFSVFLGAVFLFFFRKAAEQATAGVPGPFQNFVEMIVEFVDTQVKDSFHGRNALIAPLALSIFAWVFLMNAMDLLPVDLLPDVGKAIGLEYLRVVPSTDLNATFGMSISVFFLIIFYSLKVKGPGHFAMEFLFHPFSHWALVPFNLLLNTVEYLAKPVSLGLRLFGNMYAGELIFILIALLPWWVQPALSFPWAVFHILIITLQAFIFMVLTIVYLSLAHESH</sequence>
<gene>
    <name evidence="1" type="primary">atpB1</name>
    <name type="ordered locus">MCA0006</name>
</gene>
<comment type="function">
    <text evidence="1">Key component of the proton channel; it plays a direct role in the translocation of protons across the membrane.</text>
</comment>
<comment type="subunit">
    <text evidence="1">F-type ATPases have 2 components, CF(1) - the catalytic core - and CF(0) - the membrane proton channel. CF(1) has five subunits: alpha(3), beta(3), gamma(1), delta(1), epsilon(1). CF(0) has three main subunits: a(1), b(2) and c(9-12). The alpha and beta chains form an alternating ring which encloses part of the gamma chain. CF(1) is attached to CF(0) by a central stalk formed by the gamma and epsilon chains, while a peripheral stalk is formed by the delta and b chains.</text>
</comment>
<comment type="subcellular location">
    <subcellularLocation>
        <location evidence="1">Cell inner membrane</location>
        <topology evidence="1">Multi-pass membrane protein</topology>
    </subcellularLocation>
</comment>
<comment type="similarity">
    <text evidence="1">Belongs to the ATPase A chain family.</text>
</comment>
<reference key="1">
    <citation type="journal article" date="2004" name="PLoS Biol.">
        <title>Genomic insights into methanotrophy: the complete genome sequence of Methylococcus capsulatus (Bath).</title>
        <authorList>
            <person name="Ward N.L."/>
            <person name="Larsen O."/>
            <person name="Sakwa J."/>
            <person name="Bruseth L."/>
            <person name="Khouri H.M."/>
            <person name="Durkin A.S."/>
            <person name="Dimitrov G."/>
            <person name="Jiang L."/>
            <person name="Scanlan D."/>
            <person name="Kang K.H."/>
            <person name="Lewis M.R."/>
            <person name="Nelson K.E."/>
            <person name="Methe B.A."/>
            <person name="Wu M."/>
            <person name="Heidelberg J.F."/>
            <person name="Paulsen I.T."/>
            <person name="Fouts D.E."/>
            <person name="Ravel J."/>
            <person name="Tettelin H."/>
            <person name="Ren Q."/>
            <person name="Read T.D."/>
            <person name="DeBoy R.T."/>
            <person name="Seshadri R."/>
            <person name="Salzberg S.L."/>
            <person name="Jensen H.B."/>
            <person name="Birkeland N.K."/>
            <person name="Nelson W.C."/>
            <person name="Dodson R.J."/>
            <person name="Grindhaug S.H."/>
            <person name="Holt I.E."/>
            <person name="Eidhammer I."/>
            <person name="Jonasen I."/>
            <person name="Vanaken S."/>
            <person name="Utterback T.R."/>
            <person name="Feldblyum T.V."/>
            <person name="Fraser C.M."/>
            <person name="Lillehaug J.R."/>
            <person name="Eisen J.A."/>
        </authorList>
    </citation>
    <scope>NUCLEOTIDE SEQUENCE [LARGE SCALE GENOMIC DNA]</scope>
    <source>
        <strain>ATCC 33009 / NCIMB 11132 / Bath</strain>
    </source>
</reference>
<evidence type="ECO:0000255" key="1">
    <source>
        <dbReference type="HAMAP-Rule" id="MF_01393"/>
    </source>
</evidence>
<name>ATP61_METCA</name>
<accession>Q60CS0</accession>
<organism>
    <name type="scientific">Methylococcus capsulatus (strain ATCC 33009 / NCIMB 11132 / Bath)</name>
    <dbReference type="NCBI Taxonomy" id="243233"/>
    <lineage>
        <taxon>Bacteria</taxon>
        <taxon>Pseudomonadati</taxon>
        <taxon>Pseudomonadota</taxon>
        <taxon>Gammaproteobacteria</taxon>
        <taxon>Methylococcales</taxon>
        <taxon>Methylococcaceae</taxon>
        <taxon>Methylococcus</taxon>
    </lineage>
</organism>
<protein>
    <recommendedName>
        <fullName evidence="1">ATP synthase subunit a 1</fullName>
    </recommendedName>
    <alternativeName>
        <fullName evidence="1">ATP synthase F0 sector subunit a 1</fullName>
    </alternativeName>
    <alternativeName>
        <fullName evidence="1">F-ATPase subunit 6 1</fullName>
    </alternativeName>
</protein>
<keyword id="KW-0066">ATP synthesis</keyword>
<keyword id="KW-0997">Cell inner membrane</keyword>
<keyword id="KW-1003">Cell membrane</keyword>
<keyword id="KW-0138">CF(0)</keyword>
<keyword id="KW-0375">Hydrogen ion transport</keyword>
<keyword id="KW-0406">Ion transport</keyword>
<keyword id="KW-0472">Membrane</keyword>
<keyword id="KW-1185">Reference proteome</keyword>
<keyword id="KW-0812">Transmembrane</keyword>
<keyword id="KW-1133">Transmembrane helix</keyword>
<keyword id="KW-0813">Transport</keyword>
<feature type="chain" id="PRO_0000362347" description="ATP synthase subunit a 1">
    <location>
        <begin position="1"/>
        <end position="259"/>
    </location>
</feature>
<feature type="transmembrane region" description="Helical" evidence="1">
    <location>
        <begin position="30"/>
        <end position="50"/>
    </location>
</feature>
<feature type="transmembrane region" description="Helical" evidence="1">
    <location>
        <begin position="90"/>
        <end position="110"/>
    </location>
</feature>
<feature type="transmembrane region" description="Helical" evidence="1">
    <location>
        <begin position="135"/>
        <end position="155"/>
    </location>
</feature>
<feature type="transmembrane region" description="Helical" evidence="1">
    <location>
        <begin position="209"/>
        <end position="229"/>
    </location>
</feature>
<feature type="transmembrane region" description="Helical" evidence="1">
    <location>
        <begin position="230"/>
        <end position="250"/>
    </location>
</feature>
<proteinExistence type="inferred from homology"/>